<name>MUTS_NITV4</name>
<comment type="function">
    <text evidence="1">This protein is involved in the repair of mismatches in DNA. It is possible that it carries out the mismatch recognition step. This protein has a weak ATPase activity.</text>
</comment>
<comment type="similarity">
    <text evidence="1">Belongs to the DNA mismatch repair MutS family.</text>
</comment>
<sequence>MTNPSPKLTPMFEQYLRIKEDYPDALLFYRMGDFYELFFDDAETTARELQIALTCRNPNAELKAPMCGVPYHAVEGYISQLLDKGYRVAICEQIEDPKEAKGLVKRAVTRVLTPGTVIDDANLDAKEHNYLGALFWNQDAEAGAFAWVDVSTGEWSGLYSRKLAELWQWAQKMAPRELLLPEGVDTPAMATLGTTQTVRVPARSHFDLKSGTERVMRAQGVADLGSLGLEGKPELVRACAALLAYLAQTQKQELSHLAPFKPLNLGRHLIIDEVTERNLELFHRLDGRKGPGTLWHILDRTLTPMGGRLLEERMHHPWREAGPIRETQQVVEWLFQDDVRREALRTALDLVYDLERLSTRIFLNRATPKDFIALRQSLSALPAVRATLERPANPEGTYPTDAETSGDTLPKPLSDMLSAWDDLADYADLLRRALTDNPPHLVTEGGLFRPGFDPDLDELLDLAEHGEARLQELLAEEQTVSGLPKLKLGYNRVFGYFFELSRAGADSVPEHFVRRQTLANAERFTTERLKELEEKLVSATDRRKTLEYRLFQSLRDTVAEARPRVLFMADMLAHLDFWQSLADVARRNGWVRPDVHTGHDIVIREGRHPVVEAMQGSASFVPNDLRMDEKRRLLLITGPNMAGKSTVLRQTAIICLLAQMGAFVPAREASIGIADRIFSRVGASDNLAQGQSTFMVEMMETARILRQASKRSLVILDEIGRGTSTFDGMALAWAVVEELTRRAGGGIRTLFATHYHEITSLEGRIPGVHNMNIAIREWNGDIVFLRRLVPGPADKSYGIEVARLAGVPHSVVQRARELLADLERTRDAARGTNSAPSRQTLPGLDLPSKQEQVDTIVAPPPCSGVEHPLLVALRDIDTDDMTPLEALKRITEWKQLWGTTREDRS</sequence>
<organism>
    <name type="scientific">Nitratidesulfovibrio vulgaris (strain DP4)</name>
    <name type="common">Desulfovibrio vulgaris</name>
    <dbReference type="NCBI Taxonomy" id="391774"/>
    <lineage>
        <taxon>Bacteria</taxon>
        <taxon>Pseudomonadati</taxon>
        <taxon>Thermodesulfobacteriota</taxon>
        <taxon>Desulfovibrionia</taxon>
        <taxon>Desulfovibrionales</taxon>
        <taxon>Desulfovibrionaceae</taxon>
        <taxon>Nitratidesulfovibrio</taxon>
    </lineage>
</organism>
<reference key="1">
    <citation type="journal article" date="2009" name="Environ. Microbiol.">
        <title>Contribution of mobile genetic elements to Desulfovibrio vulgaris genome plasticity.</title>
        <authorList>
            <person name="Walker C.B."/>
            <person name="Stolyar S."/>
            <person name="Chivian D."/>
            <person name="Pinel N."/>
            <person name="Gabster J.A."/>
            <person name="Dehal P.S."/>
            <person name="He Z."/>
            <person name="Yang Z.K."/>
            <person name="Yen H.C."/>
            <person name="Zhou J."/>
            <person name="Wall J.D."/>
            <person name="Hazen T.C."/>
            <person name="Arkin A.P."/>
            <person name="Stahl D.A."/>
        </authorList>
    </citation>
    <scope>NUCLEOTIDE SEQUENCE [LARGE SCALE GENOMIC DNA]</scope>
    <source>
        <strain>DP4</strain>
    </source>
</reference>
<feature type="chain" id="PRO_1000008056" description="DNA mismatch repair protein MutS">
    <location>
        <begin position="1"/>
        <end position="905"/>
    </location>
</feature>
<feature type="region of interest" description="Disordered" evidence="2">
    <location>
        <begin position="388"/>
        <end position="410"/>
    </location>
</feature>
<feature type="region of interest" description="Disordered" evidence="2">
    <location>
        <begin position="826"/>
        <end position="847"/>
    </location>
</feature>
<feature type="compositionally biased region" description="Polar residues" evidence="2">
    <location>
        <begin position="831"/>
        <end position="840"/>
    </location>
</feature>
<feature type="binding site" evidence="1">
    <location>
        <begin position="638"/>
        <end position="645"/>
    </location>
    <ligand>
        <name>ATP</name>
        <dbReference type="ChEBI" id="CHEBI:30616"/>
    </ligand>
</feature>
<protein>
    <recommendedName>
        <fullName evidence="1">DNA mismatch repair protein MutS</fullName>
    </recommendedName>
</protein>
<dbReference type="EMBL" id="CP000527">
    <property type="protein sequence ID" value="ABM28455.1"/>
    <property type="molecule type" value="Genomic_DNA"/>
</dbReference>
<dbReference type="RefSeq" id="WP_011792254.1">
    <property type="nucleotide sequence ID" value="NC_008751.1"/>
</dbReference>
<dbReference type="SMR" id="A1VDD9"/>
<dbReference type="KEGG" id="dvl:Dvul_1437"/>
<dbReference type="HOGENOM" id="CLU_002472_3_1_7"/>
<dbReference type="Proteomes" id="UP000009173">
    <property type="component" value="Chromosome"/>
</dbReference>
<dbReference type="GO" id="GO:0005829">
    <property type="term" value="C:cytosol"/>
    <property type="evidence" value="ECO:0007669"/>
    <property type="project" value="TreeGrafter"/>
</dbReference>
<dbReference type="GO" id="GO:0005524">
    <property type="term" value="F:ATP binding"/>
    <property type="evidence" value="ECO:0007669"/>
    <property type="project" value="UniProtKB-UniRule"/>
</dbReference>
<dbReference type="GO" id="GO:0140664">
    <property type="term" value="F:ATP-dependent DNA damage sensor activity"/>
    <property type="evidence" value="ECO:0007669"/>
    <property type="project" value="InterPro"/>
</dbReference>
<dbReference type="GO" id="GO:0003684">
    <property type="term" value="F:damaged DNA binding"/>
    <property type="evidence" value="ECO:0007669"/>
    <property type="project" value="UniProtKB-UniRule"/>
</dbReference>
<dbReference type="GO" id="GO:0030983">
    <property type="term" value="F:mismatched DNA binding"/>
    <property type="evidence" value="ECO:0007669"/>
    <property type="project" value="InterPro"/>
</dbReference>
<dbReference type="GO" id="GO:0006298">
    <property type="term" value="P:mismatch repair"/>
    <property type="evidence" value="ECO:0007669"/>
    <property type="project" value="UniProtKB-UniRule"/>
</dbReference>
<dbReference type="CDD" id="cd03284">
    <property type="entry name" value="ABC_MutS1"/>
    <property type="match status" value="1"/>
</dbReference>
<dbReference type="FunFam" id="3.40.1170.10:FF:000001">
    <property type="entry name" value="DNA mismatch repair protein MutS"/>
    <property type="match status" value="1"/>
</dbReference>
<dbReference type="FunFam" id="3.40.50.300:FF:000870">
    <property type="entry name" value="MutS protein homolog 4"/>
    <property type="match status" value="1"/>
</dbReference>
<dbReference type="Gene3D" id="1.10.1420.10">
    <property type="match status" value="2"/>
</dbReference>
<dbReference type="Gene3D" id="3.40.1170.10">
    <property type="entry name" value="DNA repair protein MutS, domain I"/>
    <property type="match status" value="1"/>
</dbReference>
<dbReference type="Gene3D" id="3.30.420.110">
    <property type="entry name" value="MutS, connector domain"/>
    <property type="match status" value="1"/>
</dbReference>
<dbReference type="Gene3D" id="3.40.50.300">
    <property type="entry name" value="P-loop containing nucleotide triphosphate hydrolases"/>
    <property type="match status" value="1"/>
</dbReference>
<dbReference type="HAMAP" id="MF_00096">
    <property type="entry name" value="MutS"/>
    <property type="match status" value="1"/>
</dbReference>
<dbReference type="InterPro" id="IPR005748">
    <property type="entry name" value="DNA_mismatch_repair_MutS"/>
</dbReference>
<dbReference type="InterPro" id="IPR007695">
    <property type="entry name" value="DNA_mismatch_repair_MutS-lik_N"/>
</dbReference>
<dbReference type="InterPro" id="IPR017261">
    <property type="entry name" value="DNA_mismatch_repair_MutS/MSH"/>
</dbReference>
<dbReference type="InterPro" id="IPR000432">
    <property type="entry name" value="DNA_mismatch_repair_MutS_C"/>
</dbReference>
<dbReference type="InterPro" id="IPR007861">
    <property type="entry name" value="DNA_mismatch_repair_MutS_clamp"/>
</dbReference>
<dbReference type="InterPro" id="IPR007696">
    <property type="entry name" value="DNA_mismatch_repair_MutS_core"/>
</dbReference>
<dbReference type="InterPro" id="IPR016151">
    <property type="entry name" value="DNA_mismatch_repair_MutS_N"/>
</dbReference>
<dbReference type="InterPro" id="IPR036187">
    <property type="entry name" value="DNA_mismatch_repair_MutS_sf"/>
</dbReference>
<dbReference type="InterPro" id="IPR007860">
    <property type="entry name" value="DNA_mmatch_repair_MutS_con_dom"/>
</dbReference>
<dbReference type="InterPro" id="IPR045076">
    <property type="entry name" value="MutS"/>
</dbReference>
<dbReference type="InterPro" id="IPR036678">
    <property type="entry name" value="MutS_con_dom_sf"/>
</dbReference>
<dbReference type="InterPro" id="IPR027417">
    <property type="entry name" value="P-loop_NTPase"/>
</dbReference>
<dbReference type="NCBIfam" id="TIGR01070">
    <property type="entry name" value="mutS1"/>
    <property type="match status" value="1"/>
</dbReference>
<dbReference type="NCBIfam" id="NF003810">
    <property type="entry name" value="PRK05399.1"/>
    <property type="match status" value="1"/>
</dbReference>
<dbReference type="PANTHER" id="PTHR11361:SF34">
    <property type="entry name" value="DNA MISMATCH REPAIR PROTEIN MSH1, MITOCHONDRIAL"/>
    <property type="match status" value="1"/>
</dbReference>
<dbReference type="PANTHER" id="PTHR11361">
    <property type="entry name" value="DNA MISMATCH REPAIR PROTEIN MUTS FAMILY MEMBER"/>
    <property type="match status" value="1"/>
</dbReference>
<dbReference type="Pfam" id="PF01624">
    <property type="entry name" value="MutS_I"/>
    <property type="match status" value="1"/>
</dbReference>
<dbReference type="Pfam" id="PF05188">
    <property type="entry name" value="MutS_II"/>
    <property type="match status" value="1"/>
</dbReference>
<dbReference type="Pfam" id="PF05192">
    <property type="entry name" value="MutS_III"/>
    <property type="match status" value="1"/>
</dbReference>
<dbReference type="Pfam" id="PF05190">
    <property type="entry name" value="MutS_IV"/>
    <property type="match status" value="1"/>
</dbReference>
<dbReference type="Pfam" id="PF00488">
    <property type="entry name" value="MutS_V"/>
    <property type="match status" value="1"/>
</dbReference>
<dbReference type="PIRSF" id="PIRSF037677">
    <property type="entry name" value="DNA_mis_repair_Msh6"/>
    <property type="match status" value="1"/>
</dbReference>
<dbReference type="SMART" id="SM00534">
    <property type="entry name" value="MUTSac"/>
    <property type="match status" value="1"/>
</dbReference>
<dbReference type="SMART" id="SM00533">
    <property type="entry name" value="MUTSd"/>
    <property type="match status" value="1"/>
</dbReference>
<dbReference type="SUPFAM" id="SSF55271">
    <property type="entry name" value="DNA repair protein MutS, domain I"/>
    <property type="match status" value="1"/>
</dbReference>
<dbReference type="SUPFAM" id="SSF53150">
    <property type="entry name" value="DNA repair protein MutS, domain II"/>
    <property type="match status" value="1"/>
</dbReference>
<dbReference type="SUPFAM" id="SSF48334">
    <property type="entry name" value="DNA repair protein MutS, domain III"/>
    <property type="match status" value="1"/>
</dbReference>
<dbReference type="SUPFAM" id="SSF52540">
    <property type="entry name" value="P-loop containing nucleoside triphosphate hydrolases"/>
    <property type="match status" value="1"/>
</dbReference>
<dbReference type="PROSITE" id="PS00486">
    <property type="entry name" value="DNA_MISMATCH_REPAIR_2"/>
    <property type="match status" value="1"/>
</dbReference>
<gene>
    <name evidence="1" type="primary">mutS</name>
    <name type="ordered locus">Dvul_1437</name>
</gene>
<accession>A1VDD9</accession>
<evidence type="ECO:0000255" key="1">
    <source>
        <dbReference type="HAMAP-Rule" id="MF_00096"/>
    </source>
</evidence>
<evidence type="ECO:0000256" key="2">
    <source>
        <dbReference type="SAM" id="MobiDB-lite"/>
    </source>
</evidence>
<proteinExistence type="inferred from homology"/>
<keyword id="KW-0067">ATP-binding</keyword>
<keyword id="KW-0227">DNA damage</keyword>
<keyword id="KW-0234">DNA repair</keyword>
<keyword id="KW-0238">DNA-binding</keyword>
<keyword id="KW-0547">Nucleotide-binding</keyword>